<reference key="1">
    <citation type="journal article" date="1995" name="Arch. Biochem. Biophys.">
        <title>The inducible 9, 10-dihydrophenanthrene pathway: characterization and expression of bibenzyl synthase and S-adenosylhomocysteine hydrolase.</title>
        <authorList>
            <person name="Preisig-Mueller R."/>
            <person name="Gnau P."/>
            <person name="Kindl H."/>
        </authorList>
    </citation>
    <scope>NUCLEOTIDE SEQUENCE [MRNA]</scope>
</reference>
<feature type="chain" id="PRO_0000116929" description="Adenosylhomocysteinase">
    <location>
        <begin position="1"/>
        <end position="485"/>
    </location>
</feature>
<feature type="binding site" evidence="1">
    <location>
        <position position="64"/>
    </location>
    <ligand>
        <name>substrate</name>
    </ligand>
</feature>
<feature type="binding site" evidence="1">
    <location>
        <position position="139"/>
    </location>
    <ligand>
        <name>substrate</name>
    </ligand>
</feature>
<feature type="binding site" evidence="1">
    <location>
        <position position="205"/>
    </location>
    <ligand>
        <name>substrate</name>
    </ligand>
</feature>
<feature type="binding site" evidence="1">
    <location>
        <begin position="206"/>
        <end position="208"/>
    </location>
    <ligand>
        <name>NAD(+)</name>
        <dbReference type="ChEBI" id="CHEBI:57540"/>
    </ligand>
</feature>
<feature type="binding site" evidence="1">
    <location>
        <position position="235"/>
    </location>
    <ligand>
        <name>substrate</name>
    </ligand>
</feature>
<feature type="binding site" evidence="1">
    <location>
        <position position="239"/>
    </location>
    <ligand>
        <name>substrate</name>
    </ligand>
</feature>
<feature type="binding site" evidence="1">
    <location>
        <position position="240"/>
    </location>
    <ligand>
        <name>NAD(+)</name>
        <dbReference type="ChEBI" id="CHEBI:57540"/>
    </ligand>
</feature>
<feature type="binding site" evidence="1">
    <location>
        <begin position="269"/>
        <end position="274"/>
    </location>
    <ligand>
        <name>NAD(+)</name>
        <dbReference type="ChEBI" id="CHEBI:57540"/>
    </ligand>
</feature>
<feature type="binding site" evidence="1">
    <location>
        <position position="292"/>
    </location>
    <ligand>
        <name>NAD(+)</name>
        <dbReference type="ChEBI" id="CHEBI:57540"/>
    </ligand>
</feature>
<feature type="binding site" evidence="1">
    <location>
        <position position="327"/>
    </location>
    <ligand>
        <name>NAD(+)</name>
        <dbReference type="ChEBI" id="CHEBI:57540"/>
    </ligand>
</feature>
<feature type="binding site" evidence="1">
    <location>
        <begin position="348"/>
        <end position="350"/>
    </location>
    <ligand>
        <name>NAD(+)</name>
        <dbReference type="ChEBI" id="CHEBI:57540"/>
    </ligand>
</feature>
<feature type="binding site" evidence="1">
    <location>
        <position position="397"/>
    </location>
    <ligand>
        <name>NAD(+)</name>
        <dbReference type="ChEBI" id="CHEBI:57540"/>
    </ligand>
</feature>
<accession>P50249</accession>
<sequence length="485" mass="53141">MALLVEKTTSGREYKVKDLSQADFGRLEIELAEVEMPGLMACRAEFGPSQPFKGARISGSLHMTIQTAVLIETLTALGAEVRWCSCNIFSTQDHAAAAIARDSAAVFAWKGETLQEYWWCTERCLEWGAGGGPDLIVDDGGDATLLIHEGVKAEEEYEKNGKIPDPASTDNAEFQIVLGLIRDSLSVDPKKYRRMKERLVGVSEETTTGVKRLYQMQYSGTLLFPAINVNDSVTKSKFDNLYGCRHSLPDGLMRATDVMIAGKVAVVCGYGDVGLGCAAALKTAGARVIVTEIDPICALQALMEGLPVLRLEDVVSEADIFVTTTGNKDIIMVDHMRKMKNNAIVCNIGHFDNEIDMLGLESFPGVKRITIKPQTDRRVFPDTNSGILVLAEGRLMNLGCATGHPSFVMSSSFTNQVIAQLELWKERASGKYEKKVYVLPKHLDEKVAALHLGKLGAKLTKLTPSQADYISVPVEGPYKPAHYRY</sequence>
<organism>
    <name type="scientific">Phalaenopsis sp.</name>
    <name type="common">Moth orchid</name>
    <dbReference type="NCBI Taxonomy" id="36900"/>
    <lineage>
        <taxon>Eukaryota</taxon>
        <taxon>Viridiplantae</taxon>
        <taxon>Streptophyta</taxon>
        <taxon>Embryophyta</taxon>
        <taxon>Tracheophyta</taxon>
        <taxon>Spermatophyta</taxon>
        <taxon>Magnoliopsida</taxon>
        <taxon>Liliopsida</taxon>
        <taxon>Asparagales</taxon>
        <taxon>Orchidaceae</taxon>
        <taxon>Epidendroideae</taxon>
        <taxon>Vandeae</taxon>
        <taxon>Aeridinae</taxon>
        <taxon>Phalaenopsis</taxon>
    </lineage>
</organism>
<name>SAHH_PHASS</name>
<proteinExistence type="evidence at transcript level"/>
<comment type="function">
    <text evidence="1">Adenosylhomocysteine is a competitive inhibitor of S-adenosyl-L-methionine-dependent methyl transferase reactions; therefore adenosylhomocysteinase may play a key role in the control of methylations via regulation of the intracellular concentration of adenosylhomocysteine.</text>
</comment>
<comment type="catalytic activity">
    <reaction>
        <text>S-adenosyl-L-homocysteine + H2O = L-homocysteine + adenosine</text>
        <dbReference type="Rhea" id="RHEA:21708"/>
        <dbReference type="ChEBI" id="CHEBI:15377"/>
        <dbReference type="ChEBI" id="CHEBI:16335"/>
        <dbReference type="ChEBI" id="CHEBI:57856"/>
        <dbReference type="ChEBI" id="CHEBI:58199"/>
        <dbReference type="EC" id="3.13.2.1"/>
    </reaction>
</comment>
<comment type="cofactor">
    <cofactor evidence="1">
        <name>NAD(+)</name>
        <dbReference type="ChEBI" id="CHEBI:57540"/>
    </cofactor>
    <text evidence="1">Binds 1 NAD(+) per subunit.</text>
</comment>
<comment type="pathway">
    <text>Amino-acid biosynthesis; L-homocysteine biosynthesis; L-homocysteine from S-adenosyl-L-homocysteine: step 1/1.</text>
</comment>
<comment type="induction">
    <text>By infection with B.cinerea.</text>
</comment>
<comment type="similarity">
    <text evidence="2">Belongs to the adenosylhomocysteinase family.</text>
</comment>
<protein>
    <recommendedName>
        <fullName>Adenosylhomocysteinase</fullName>
        <shortName>AdoHcyase</shortName>
        <ecNumber>3.13.2.1</ecNumber>
    </recommendedName>
    <alternativeName>
        <fullName>S-adenosyl-L-homocysteine hydrolase</fullName>
    </alternativeName>
</protein>
<evidence type="ECO:0000250" key="1"/>
<evidence type="ECO:0000305" key="2"/>
<dbReference type="EC" id="3.13.2.1"/>
<dbReference type="EMBL" id="X79905">
    <property type="protein sequence ID" value="CAA56278.1"/>
    <property type="molecule type" value="mRNA"/>
</dbReference>
<dbReference type="PIR" id="S71621">
    <property type="entry name" value="S71621"/>
</dbReference>
<dbReference type="SMR" id="P50249"/>
<dbReference type="UniPathway" id="UPA00314">
    <property type="reaction ID" value="UER00076"/>
</dbReference>
<dbReference type="GO" id="GO:0005829">
    <property type="term" value="C:cytosol"/>
    <property type="evidence" value="ECO:0007669"/>
    <property type="project" value="TreeGrafter"/>
</dbReference>
<dbReference type="GO" id="GO:0004013">
    <property type="term" value="F:adenosylhomocysteinase activity"/>
    <property type="evidence" value="ECO:0007669"/>
    <property type="project" value="RHEA"/>
</dbReference>
<dbReference type="GO" id="GO:0006730">
    <property type="term" value="P:one-carbon metabolic process"/>
    <property type="evidence" value="ECO:0007669"/>
    <property type="project" value="UniProtKB-KW"/>
</dbReference>
<dbReference type="GO" id="GO:0033353">
    <property type="term" value="P:S-adenosylmethionine cycle"/>
    <property type="evidence" value="ECO:0007669"/>
    <property type="project" value="TreeGrafter"/>
</dbReference>
<dbReference type="CDD" id="cd00401">
    <property type="entry name" value="SAHH"/>
    <property type="match status" value="1"/>
</dbReference>
<dbReference type="FunFam" id="3.40.50.720:FF:000004">
    <property type="entry name" value="Adenosylhomocysteinase"/>
    <property type="match status" value="1"/>
</dbReference>
<dbReference type="Gene3D" id="3.40.50.1480">
    <property type="entry name" value="Adenosylhomocysteinase-like"/>
    <property type="match status" value="1"/>
</dbReference>
<dbReference type="Gene3D" id="3.40.50.720">
    <property type="entry name" value="NAD(P)-binding Rossmann-like Domain"/>
    <property type="match status" value="1"/>
</dbReference>
<dbReference type="HAMAP" id="MF_00563">
    <property type="entry name" value="AdoHcyase"/>
    <property type="match status" value="1"/>
</dbReference>
<dbReference type="InterPro" id="IPR042172">
    <property type="entry name" value="Adenosylhomocyst_ase-like_sf"/>
</dbReference>
<dbReference type="InterPro" id="IPR000043">
    <property type="entry name" value="Adenosylhomocysteinase-like"/>
</dbReference>
<dbReference type="InterPro" id="IPR015878">
    <property type="entry name" value="Ado_hCys_hydrolase_NAD-bd"/>
</dbReference>
<dbReference type="InterPro" id="IPR036291">
    <property type="entry name" value="NAD(P)-bd_dom_sf"/>
</dbReference>
<dbReference type="InterPro" id="IPR020082">
    <property type="entry name" value="S-Ado-L-homoCys_hydrolase_CS"/>
</dbReference>
<dbReference type="NCBIfam" id="TIGR00936">
    <property type="entry name" value="ahcY"/>
    <property type="match status" value="1"/>
</dbReference>
<dbReference type="NCBIfam" id="NF004005">
    <property type="entry name" value="PRK05476.2-3"/>
    <property type="match status" value="1"/>
</dbReference>
<dbReference type="PANTHER" id="PTHR23420">
    <property type="entry name" value="ADENOSYLHOMOCYSTEINASE"/>
    <property type="match status" value="1"/>
</dbReference>
<dbReference type="PANTHER" id="PTHR23420:SF0">
    <property type="entry name" value="ADENOSYLHOMOCYSTEINASE"/>
    <property type="match status" value="1"/>
</dbReference>
<dbReference type="Pfam" id="PF05221">
    <property type="entry name" value="AdoHcyase"/>
    <property type="match status" value="1"/>
</dbReference>
<dbReference type="Pfam" id="PF00670">
    <property type="entry name" value="AdoHcyase_NAD"/>
    <property type="match status" value="1"/>
</dbReference>
<dbReference type="PIRSF" id="PIRSF001109">
    <property type="entry name" value="Ad_hcy_hydrolase"/>
    <property type="match status" value="1"/>
</dbReference>
<dbReference type="SMART" id="SM00996">
    <property type="entry name" value="AdoHcyase"/>
    <property type="match status" value="1"/>
</dbReference>
<dbReference type="SMART" id="SM00997">
    <property type="entry name" value="AdoHcyase_NAD"/>
    <property type="match status" value="1"/>
</dbReference>
<dbReference type="SUPFAM" id="SSF52283">
    <property type="entry name" value="Formate/glycerate dehydrogenase catalytic domain-like"/>
    <property type="match status" value="2"/>
</dbReference>
<dbReference type="SUPFAM" id="SSF51735">
    <property type="entry name" value="NAD(P)-binding Rossmann-fold domains"/>
    <property type="match status" value="1"/>
</dbReference>
<dbReference type="PROSITE" id="PS00738">
    <property type="entry name" value="ADOHCYASE_1"/>
    <property type="match status" value="1"/>
</dbReference>
<dbReference type="PROSITE" id="PS00739">
    <property type="entry name" value="ADOHCYASE_2"/>
    <property type="match status" value="1"/>
</dbReference>
<gene>
    <name type="primary">SAHH</name>
</gene>
<keyword id="KW-0378">Hydrolase</keyword>
<keyword id="KW-0520">NAD</keyword>
<keyword id="KW-0554">One-carbon metabolism</keyword>